<organism>
    <name type="scientific">Staphylococcus epidermidis (strain ATCC 12228 / FDA PCI 1200)</name>
    <dbReference type="NCBI Taxonomy" id="176280"/>
    <lineage>
        <taxon>Bacteria</taxon>
        <taxon>Bacillati</taxon>
        <taxon>Bacillota</taxon>
        <taxon>Bacilli</taxon>
        <taxon>Bacillales</taxon>
        <taxon>Staphylococcaceae</taxon>
        <taxon>Staphylococcus</taxon>
    </lineage>
</organism>
<feature type="chain" id="PRO_0000180525" description="DNA primase">
    <location>
        <begin position="1"/>
        <end position="598"/>
    </location>
</feature>
<feature type="domain" description="Toprim" evidence="1">
    <location>
        <begin position="260"/>
        <end position="341"/>
    </location>
</feature>
<feature type="zinc finger region" description="CHC2-type" evidence="1">
    <location>
        <begin position="38"/>
        <end position="62"/>
    </location>
</feature>
<feature type="binding site" evidence="1">
    <location>
        <position position="266"/>
    </location>
    <ligand>
        <name>Mg(2+)</name>
        <dbReference type="ChEBI" id="CHEBI:18420"/>
        <label>1</label>
        <note>catalytic</note>
    </ligand>
</feature>
<feature type="binding site" evidence="1">
    <location>
        <position position="310"/>
    </location>
    <ligand>
        <name>Mg(2+)</name>
        <dbReference type="ChEBI" id="CHEBI:18420"/>
        <label>1</label>
        <note>catalytic</note>
    </ligand>
</feature>
<feature type="binding site" evidence="1">
    <location>
        <position position="310"/>
    </location>
    <ligand>
        <name>Mg(2+)</name>
        <dbReference type="ChEBI" id="CHEBI:18420"/>
        <label>2</label>
    </ligand>
</feature>
<feature type="binding site" evidence="1">
    <location>
        <position position="312"/>
    </location>
    <ligand>
        <name>Mg(2+)</name>
        <dbReference type="ChEBI" id="CHEBI:18420"/>
        <label>2</label>
    </ligand>
</feature>
<sequence length="598" mass="70422">MRIDQSVIDEIKNKTDILDLVSEYVKLEKRGRNYIGLCPFHDEKTPSFTVSEDKQICHCFGCKKGGNVFQFTQEIKDVSFVEAVKDLGERVNIQVDIGQNQTNSSTKIASDELKMIEMHELIKDYYHYALMKTVEGEEALNYLHERGFTDDLIKEREIGYAPDNSHFCHDFLEKKGYDIELAFEAGLLSRNEENFTYFDRFRNRIMFPLKNGQGRIVGYSGRTYTDQEPKYLNSPETPIFQKRRILYNLNKARKFIRKQDEIILLEGFMDVIKSDYAGLKQVVASMGTQLSQEHITFLQKLTQNVTLMFDGDYAGKEATLKTGQALLNQGLNVYVVQLPSGMDPDDYIRKYDNEQFLKFVQQDKQSFVLFKVKMYQNEINHNDLAYEKHFKETVRDLSLVNSGIIRNKLIQNIADIFKVNPETIQYELDATYQHQMSSNTYPTFQDEPSKQQLILGRLTKNEKAERALIKHLTKDKDTFLNYYQKIVPEDFTNSYLKRIFSYLYDYYSKNDYYTISDMMQYIESNELREVLIELDQYHLNDEPYENEIEDYIQIIKNNNNEDSLESLNYKLREASRIGDSELQKYYLQLIVNKNKNRM</sequence>
<comment type="function">
    <text evidence="1">RNA polymerase that catalyzes the synthesis of short RNA molecules used as primers for DNA polymerase during DNA replication.</text>
</comment>
<comment type="catalytic activity">
    <reaction evidence="1">
        <text>ssDNA + n NTP = ssDNA/pppN(pN)n-1 hybrid + (n-1) diphosphate.</text>
        <dbReference type="EC" id="2.7.7.101"/>
    </reaction>
</comment>
<comment type="cofactor">
    <cofactor evidence="1">
        <name>Zn(2+)</name>
        <dbReference type="ChEBI" id="CHEBI:29105"/>
    </cofactor>
    <text evidence="1">Binds 1 zinc ion per monomer.</text>
</comment>
<comment type="cofactor">
    <cofactor evidence="1">
        <name>Mg(2+)</name>
        <dbReference type="ChEBI" id="CHEBI:18420"/>
    </cofactor>
    <text evidence="1">Binds two Mg(2+) per subunit.</text>
</comment>
<comment type="subunit">
    <text evidence="1">Monomer. Interacts with DnaB.</text>
</comment>
<comment type="domain">
    <text evidence="1">Contains an N-terminal zinc-binding domain, a central core domain that contains the primase activity, and a C-terminal DnaB-binding domain.</text>
</comment>
<comment type="similarity">
    <text evidence="1">Belongs to the DnaG primase family.</text>
</comment>
<protein>
    <recommendedName>
        <fullName evidence="1">DNA primase</fullName>
        <ecNumber evidence="1">2.7.7.101</ecNumber>
    </recommendedName>
</protein>
<evidence type="ECO:0000255" key="1">
    <source>
        <dbReference type="HAMAP-Rule" id="MF_00974"/>
    </source>
</evidence>
<keyword id="KW-0235">DNA replication</keyword>
<keyword id="KW-0238">DNA-binding</keyword>
<keyword id="KW-0240">DNA-directed RNA polymerase</keyword>
<keyword id="KW-0460">Magnesium</keyword>
<keyword id="KW-0479">Metal-binding</keyword>
<keyword id="KW-0548">Nucleotidyltransferase</keyword>
<keyword id="KW-0639">Primosome</keyword>
<keyword id="KW-0804">Transcription</keyword>
<keyword id="KW-0808">Transferase</keyword>
<keyword id="KW-0862">Zinc</keyword>
<keyword id="KW-0863">Zinc-finger</keyword>
<proteinExistence type="inferred from homology"/>
<dbReference type="EC" id="2.7.7.101" evidence="1"/>
<dbReference type="EMBL" id="AE015929">
    <property type="protein sequence ID" value="AAO04848.1"/>
    <property type="molecule type" value="Genomic_DNA"/>
</dbReference>
<dbReference type="RefSeq" id="NP_764804.1">
    <property type="nucleotide sequence ID" value="NC_004461.1"/>
</dbReference>
<dbReference type="RefSeq" id="WP_001831005.1">
    <property type="nucleotide sequence ID" value="NZ_WBME01000008.1"/>
</dbReference>
<dbReference type="SMR" id="Q8CP23"/>
<dbReference type="GeneID" id="50018635"/>
<dbReference type="KEGG" id="sep:SE_1249"/>
<dbReference type="PATRIC" id="fig|176280.10.peg.1217"/>
<dbReference type="eggNOG" id="COG0358">
    <property type="taxonomic scope" value="Bacteria"/>
</dbReference>
<dbReference type="HOGENOM" id="CLU_013501_3_3_9"/>
<dbReference type="OrthoDB" id="9803773at2"/>
<dbReference type="Proteomes" id="UP000001411">
    <property type="component" value="Chromosome"/>
</dbReference>
<dbReference type="GO" id="GO:0005737">
    <property type="term" value="C:cytoplasm"/>
    <property type="evidence" value="ECO:0007669"/>
    <property type="project" value="TreeGrafter"/>
</dbReference>
<dbReference type="GO" id="GO:0000428">
    <property type="term" value="C:DNA-directed RNA polymerase complex"/>
    <property type="evidence" value="ECO:0007669"/>
    <property type="project" value="UniProtKB-KW"/>
</dbReference>
<dbReference type="GO" id="GO:1990077">
    <property type="term" value="C:primosome complex"/>
    <property type="evidence" value="ECO:0007669"/>
    <property type="project" value="UniProtKB-KW"/>
</dbReference>
<dbReference type="GO" id="GO:0005524">
    <property type="term" value="F:ATP binding"/>
    <property type="evidence" value="ECO:0007669"/>
    <property type="project" value="InterPro"/>
</dbReference>
<dbReference type="GO" id="GO:0003677">
    <property type="term" value="F:DNA binding"/>
    <property type="evidence" value="ECO:0007669"/>
    <property type="project" value="UniProtKB-KW"/>
</dbReference>
<dbReference type="GO" id="GO:0003678">
    <property type="term" value="F:DNA helicase activity"/>
    <property type="evidence" value="ECO:0007669"/>
    <property type="project" value="InterPro"/>
</dbReference>
<dbReference type="GO" id="GO:0003899">
    <property type="term" value="F:DNA-directed RNA polymerase activity"/>
    <property type="evidence" value="ECO:0007669"/>
    <property type="project" value="InterPro"/>
</dbReference>
<dbReference type="GO" id="GO:0008270">
    <property type="term" value="F:zinc ion binding"/>
    <property type="evidence" value="ECO:0007669"/>
    <property type="project" value="UniProtKB-UniRule"/>
</dbReference>
<dbReference type="GO" id="GO:0006269">
    <property type="term" value="P:DNA replication, synthesis of primer"/>
    <property type="evidence" value="ECO:0007669"/>
    <property type="project" value="UniProtKB-UniRule"/>
</dbReference>
<dbReference type="CDD" id="cd03364">
    <property type="entry name" value="TOPRIM_DnaG_primases"/>
    <property type="match status" value="1"/>
</dbReference>
<dbReference type="FunFam" id="3.90.580.10:FF:000001">
    <property type="entry name" value="DNA primase"/>
    <property type="match status" value="1"/>
</dbReference>
<dbReference type="FunFam" id="3.90.980.10:FF:000001">
    <property type="entry name" value="DNA primase"/>
    <property type="match status" value="1"/>
</dbReference>
<dbReference type="Gene3D" id="3.40.1360.10">
    <property type="match status" value="1"/>
</dbReference>
<dbReference type="Gene3D" id="3.90.980.10">
    <property type="entry name" value="DNA primase, catalytic core, N-terminal domain"/>
    <property type="match status" value="1"/>
</dbReference>
<dbReference type="Gene3D" id="1.10.860.10">
    <property type="entry name" value="DNAb Helicase, Chain A"/>
    <property type="match status" value="1"/>
</dbReference>
<dbReference type="Gene3D" id="1.20.50.20">
    <property type="entry name" value="DnaG, RNA polymerase domain, helical bundle"/>
    <property type="match status" value="1"/>
</dbReference>
<dbReference type="Gene3D" id="3.90.580.10">
    <property type="entry name" value="Zinc finger, CHC2-type domain"/>
    <property type="match status" value="1"/>
</dbReference>
<dbReference type="HAMAP" id="MF_00974">
    <property type="entry name" value="DNA_primase_DnaG"/>
    <property type="match status" value="1"/>
</dbReference>
<dbReference type="InterPro" id="IPR036185">
    <property type="entry name" value="DNA_heli_DnaB-like_N_sf"/>
</dbReference>
<dbReference type="InterPro" id="IPR007693">
    <property type="entry name" value="DNA_helicase_DnaB-like_N"/>
</dbReference>
<dbReference type="InterPro" id="IPR016136">
    <property type="entry name" value="DNA_helicase_N/primase_C"/>
</dbReference>
<dbReference type="InterPro" id="IPR037068">
    <property type="entry name" value="DNA_primase_core_N_sf"/>
</dbReference>
<dbReference type="InterPro" id="IPR006295">
    <property type="entry name" value="DNA_primase_DnaG"/>
</dbReference>
<dbReference type="InterPro" id="IPR036977">
    <property type="entry name" value="DNA_primase_Znf_CHC2"/>
</dbReference>
<dbReference type="InterPro" id="IPR030846">
    <property type="entry name" value="DnaG_bac"/>
</dbReference>
<dbReference type="InterPro" id="IPR048453">
    <property type="entry name" value="DnaG_cat_HB"/>
</dbReference>
<dbReference type="InterPro" id="IPR013264">
    <property type="entry name" value="DNAG_N"/>
</dbReference>
<dbReference type="InterPro" id="IPR050219">
    <property type="entry name" value="DnaG_primase"/>
</dbReference>
<dbReference type="InterPro" id="IPR034151">
    <property type="entry name" value="TOPRIM_DnaG_bac"/>
</dbReference>
<dbReference type="InterPro" id="IPR006171">
    <property type="entry name" value="TOPRIM_dom"/>
</dbReference>
<dbReference type="InterPro" id="IPR002694">
    <property type="entry name" value="Znf_CHC2"/>
</dbReference>
<dbReference type="NCBIfam" id="TIGR01391">
    <property type="entry name" value="dnaG"/>
    <property type="match status" value="1"/>
</dbReference>
<dbReference type="PANTHER" id="PTHR30313">
    <property type="entry name" value="DNA PRIMASE"/>
    <property type="match status" value="1"/>
</dbReference>
<dbReference type="PANTHER" id="PTHR30313:SF2">
    <property type="entry name" value="DNA PRIMASE"/>
    <property type="match status" value="1"/>
</dbReference>
<dbReference type="Pfam" id="PF00772">
    <property type="entry name" value="DnaB"/>
    <property type="match status" value="1"/>
</dbReference>
<dbReference type="Pfam" id="PF21650">
    <property type="entry name" value="DnaG_cat_HB"/>
    <property type="match status" value="1"/>
</dbReference>
<dbReference type="Pfam" id="PF08275">
    <property type="entry name" value="DNAG_N"/>
    <property type="match status" value="1"/>
</dbReference>
<dbReference type="Pfam" id="PF13155">
    <property type="entry name" value="Toprim_2"/>
    <property type="match status" value="1"/>
</dbReference>
<dbReference type="Pfam" id="PF01807">
    <property type="entry name" value="Zn_ribbon_DnaG"/>
    <property type="match status" value="1"/>
</dbReference>
<dbReference type="PIRSF" id="PIRSF002811">
    <property type="entry name" value="DnaG"/>
    <property type="match status" value="1"/>
</dbReference>
<dbReference type="SMART" id="SM00493">
    <property type="entry name" value="TOPRIM"/>
    <property type="match status" value="1"/>
</dbReference>
<dbReference type="SMART" id="SM00400">
    <property type="entry name" value="ZnF_CHCC"/>
    <property type="match status" value="1"/>
</dbReference>
<dbReference type="SUPFAM" id="SSF56731">
    <property type="entry name" value="DNA primase core"/>
    <property type="match status" value="1"/>
</dbReference>
<dbReference type="SUPFAM" id="SSF48024">
    <property type="entry name" value="N-terminal domain of DnaB helicase"/>
    <property type="match status" value="1"/>
</dbReference>
<dbReference type="SUPFAM" id="SSF57783">
    <property type="entry name" value="Zinc beta-ribbon"/>
    <property type="match status" value="1"/>
</dbReference>
<dbReference type="PROSITE" id="PS50880">
    <property type="entry name" value="TOPRIM"/>
    <property type="match status" value="1"/>
</dbReference>
<gene>
    <name evidence="1" type="primary">dnaG</name>
    <name type="ordered locus">SE_1249</name>
</gene>
<name>DNAG_STAES</name>
<accession>Q8CP23</accession>
<reference key="1">
    <citation type="journal article" date="2003" name="Mol. Microbiol.">
        <title>Genome-based analysis of virulence genes in a non-biofilm-forming Staphylococcus epidermidis strain (ATCC 12228).</title>
        <authorList>
            <person name="Zhang Y.-Q."/>
            <person name="Ren S.-X."/>
            <person name="Li H.-L."/>
            <person name="Wang Y.-X."/>
            <person name="Fu G."/>
            <person name="Yang J."/>
            <person name="Qin Z.-Q."/>
            <person name="Miao Y.-G."/>
            <person name="Wang W.-Y."/>
            <person name="Chen R.-S."/>
            <person name="Shen Y."/>
            <person name="Chen Z."/>
            <person name="Yuan Z.-H."/>
            <person name="Zhao G.-P."/>
            <person name="Qu D."/>
            <person name="Danchin A."/>
            <person name="Wen Y.-M."/>
        </authorList>
    </citation>
    <scope>NUCLEOTIDE SEQUENCE [LARGE SCALE GENOMIC DNA]</scope>
    <source>
        <strain>ATCC 12228 / FDA PCI 1200</strain>
    </source>
</reference>